<comment type="function">
    <text evidence="1">Binds 23S rRNA and is also seen to make contacts with the A and possibly P site tRNAs.</text>
</comment>
<comment type="subunit">
    <text evidence="1">Part of the 50S ribosomal subunit.</text>
</comment>
<comment type="similarity">
    <text evidence="1">Belongs to the universal ribosomal protein uL16 family.</text>
</comment>
<proteinExistence type="inferred from homology"/>
<organism>
    <name type="scientific">Mycobacterium ulcerans (strain Agy99)</name>
    <dbReference type="NCBI Taxonomy" id="362242"/>
    <lineage>
        <taxon>Bacteria</taxon>
        <taxon>Bacillati</taxon>
        <taxon>Actinomycetota</taxon>
        <taxon>Actinomycetes</taxon>
        <taxon>Mycobacteriales</taxon>
        <taxon>Mycobacteriaceae</taxon>
        <taxon>Mycobacterium</taxon>
        <taxon>Mycobacterium ulcerans group</taxon>
    </lineage>
</organism>
<sequence>MLIPRKVKHRKQHHPRQRGIASGGTSVNFGDYGIQALEHAYVTNRQIESARIAINRHIKRGGKVWINIFPDRPLTKKPAETRMGSGKGSPEWWVANVKPGRVLFELSYPNEAIARAALTRAIHKLPIKARIITREEQF</sequence>
<gene>
    <name evidence="1" type="primary">rplP</name>
    <name type="ordered locus">MUL_0797</name>
</gene>
<feature type="chain" id="PRO_1000054659" description="Large ribosomal subunit protein uL16">
    <location>
        <begin position="1"/>
        <end position="138"/>
    </location>
</feature>
<feature type="region of interest" description="Disordered" evidence="2">
    <location>
        <begin position="1"/>
        <end position="24"/>
    </location>
</feature>
<feature type="compositionally biased region" description="Basic residues" evidence="2">
    <location>
        <begin position="1"/>
        <end position="17"/>
    </location>
</feature>
<name>RL16_MYCUA</name>
<reference key="1">
    <citation type="journal article" date="2007" name="Genome Res.">
        <title>Reductive evolution and niche adaptation inferred from the genome of Mycobacterium ulcerans, the causative agent of Buruli ulcer.</title>
        <authorList>
            <person name="Stinear T.P."/>
            <person name="Seemann T."/>
            <person name="Pidot S."/>
            <person name="Frigui W."/>
            <person name="Reysset G."/>
            <person name="Garnier T."/>
            <person name="Meurice G."/>
            <person name="Simon D."/>
            <person name="Bouchier C."/>
            <person name="Ma L."/>
            <person name="Tichit M."/>
            <person name="Porter J.L."/>
            <person name="Ryan J."/>
            <person name="Johnson P.D.R."/>
            <person name="Davies J.K."/>
            <person name="Jenkin G.A."/>
            <person name="Small P.L.C."/>
            <person name="Jones L.M."/>
            <person name="Tekaia F."/>
            <person name="Laval F."/>
            <person name="Daffe M."/>
            <person name="Parkhill J."/>
            <person name="Cole S.T."/>
        </authorList>
    </citation>
    <scope>NUCLEOTIDE SEQUENCE [LARGE SCALE GENOMIC DNA]</scope>
    <source>
        <strain>Agy99</strain>
    </source>
</reference>
<protein>
    <recommendedName>
        <fullName evidence="1">Large ribosomal subunit protein uL16</fullName>
    </recommendedName>
    <alternativeName>
        <fullName evidence="3">50S ribosomal protein L16</fullName>
    </alternativeName>
</protein>
<evidence type="ECO:0000255" key="1">
    <source>
        <dbReference type="HAMAP-Rule" id="MF_01342"/>
    </source>
</evidence>
<evidence type="ECO:0000256" key="2">
    <source>
        <dbReference type="SAM" id="MobiDB-lite"/>
    </source>
</evidence>
<evidence type="ECO:0000305" key="3"/>
<dbReference type="EMBL" id="CP000325">
    <property type="protein sequence ID" value="ABL03439.1"/>
    <property type="molecule type" value="Genomic_DNA"/>
</dbReference>
<dbReference type="RefSeq" id="WP_011739064.1">
    <property type="nucleotide sequence ID" value="NC_008611.1"/>
</dbReference>
<dbReference type="SMR" id="A0PM70"/>
<dbReference type="GeneID" id="93438593"/>
<dbReference type="KEGG" id="mul:MUL_0797"/>
<dbReference type="eggNOG" id="COG0197">
    <property type="taxonomic scope" value="Bacteria"/>
</dbReference>
<dbReference type="HOGENOM" id="CLU_078858_2_1_11"/>
<dbReference type="Proteomes" id="UP000000765">
    <property type="component" value="Chromosome"/>
</dbReference>
<dbReference type="GO" id="GO:0022625">
    <property type="term" value="C:cytosolic large ribosomal subunit"/>
    <property type="evidence" value="ECO:0007669"/>
    <property type="project" value="TreeGrafter"/>
</dbReference>
<dbReference type="GO" id="GO:0019843">
    <property type="term" value="F:rRNA binding"/>
    <property type="evidence" value="ECO:0007669"/>
    <property type="project" value="UniProtKB-UniRule"/>
</dbReference>
<dbReference type="GO" id="GO:0003735">
    <property type="term" value="F:structural constituent of ribosome"/>
    <property type="evidence" value="ECO:0007669"/>
    <property type="project" value="InterPro"/>
</dbReference>
<dbReference type="GO" id="GO:0000049">
    <property type="term" value="F:tRNA binding"/>
    <property type="evidence" value="ECO:0007669"/>
    <property type="project" value="UniProtKB-KW"/>
</dbReference>
<dbReference type="GO" id="GO:0006412">
    <property type="term" value="P:translation"/>
    <property type="evidence" value="ECO:0007669"/>
    <property type="project" value="UniProtKB-UniRule"/>
</dbReference>
<dbReference type="CDD" id="cd01433">
    <property type="entry name" value="Ribosomal_L16_L10e"/>
    <property type="match status" value="1"/>
</dbReference>
<dbReference type="FunFam" id="3.90.1170.10:FF:000001">
    <property type="entry name" value="50S ribosomal protein L16"/>
    <property type="match status" value="1"/>
</dbReference>
<dbReference type="Gene3D" id="3.90.1170.10">
    <property type="entry name" value="Ribosomal protein L10e/L16"/>
    <property type="match status" value="1"/>
</dbReference>
<dbReference type="HAMAP" id="MF_01342">
    <property type="entry name" value="Ribosomal_uL16"/>
    <property type="match status" value="1"/>
</dbReference>
<dbReference type="InterPro" id="IPR047873">
    <property type="entry name" value="Ribosomal_uL16"/>
</dbReference>
<dbReference type="InterPro" id="IPR000114">
    <property type="entry name" value="Ribosomal_uL16_bact-type"/>
</dbReference>
<dbReference type="InterPro" id="IPR020798">
    <property type="entry name" value="Ribosomal_uL16_CS"/>
</dbReference>
<dbReference type="InterPro" id="IPR016180">
    <property type="entry name" value="Ribosomal_uL16_dom"/>
</dbReference>
<dbReference type="InterPro" id="IPR036920">
    <property type="entry name" value="Ribosomal_uL16_sf"/>
</dbReference>
<dbReference type="NCBIfam" id="TIGR01164">
    <property type="entry name" value="rplP_bact"/>
    <property type="match status" value="1"/>
</dbReference>
<dbReference type="PANTHER" id="PTHR12220">
    <property type="entry name" value="50S/60S RIBOSOMAL PROTEIN L16"/>
    <property type="match status" value="1"/>
</dbReference>
<dbReference type="PANTHER" id="PTHR12220:SF13">
    <property type="entry name" value="LARGE RIBOSOMAL SUBUNIT PROTEIN UL16M"/>
    <property type="match status" value="1"/>
</dbReference>
<dbReference type="Pfam" id="PF00252">
    <property type="entry name" value="Ribosomal_L16"/>
    <property type="match status" value="1"/>
</dbReference>
<dbReference type="PRINTS" id="PR00060">
    <property type="entry name" value="RIBOSOMALL16"/>
</dbReference>
<dbReference type="SUPFAM" id="SSF54686">
    <property type="entry name" value="Ribosomal protein L16p/L10e"/>
    <property type="match status" value="1"/>
</dbReference>
<dbReference type="PROSITE" id="PS00586">
    <property type="entry name" value="RIBOSOMAL_L16_1"/>
    <property type="match status" value="1"/>
</dbReference>
<dbReference type="PROSITE" id="PS00701">
    <property type="entry name" value="RIBOSOMAL_L16_2"/>
    <property type="match status" value="1"/>
</dbReference>
<keyword id="KW-0687">Ribonucleoprotein</keyword>
<keyword id="KW-0689">Ribosomal protein</keyword>
<keyword id="KW-0694">RNA-binding</keyword>
<keyword id="KW-0699">rRNA-binding</keyword>
<keyword id="KW-0820">tRNA-binding</keyword>
<accession>A0PM70</accession>